<protein>
    <recommendedName>
        <fullName evidence="1">Phosphopantetheine adenylyltransferase</fullName>
        <ecNumber evidence="1">2.7.7.3</ecNumber>
    </recommendedName>
    <alternativeName>
        <fullName evidence="1">Dephospho-CoA pyrophosphorylase</fullName>
    </alternativeName>
    <alternativeName>
        <fullName evidence="1">Pantetheine-phosphate adenylyltransferase</fullName>
        <shortName evidence="1">PPAT</shortName>
    </alternativeName>
</protein>
<reference key="1">
    <citation type="journal article" date="2006" name="J. Bacteriol.">
        <title>Complete genome sequence of the dehalorespiring bacterium Desulfitobacterium hafniense Y51 and comparison with Dehalococcoides ethenogenes 195.</title>
        <authorList>
            <person name="Nonaka H."/>
            <person name="Keresztes G."/>
            <person name="Shinoda Y."/>
            <person name="Ikenaga Y."/>
            <person name="Abe M."/>
            <person name="Naito K."/>
            <person name="Inatomi K."/>
            <person name="Furukawa K."/>
            <person name="Inui M."/>
            <person name="Yukawa H."/>
        </authorList>
    </citation>
    <scope>NUCLEOTIDE SEQUENCE [LARGE SCALE GENOMIC DNA]</scope>
    <source>
        <strain>Y51</strain>
    </source>
</reference>
<gene>
    <name evidence="1" type="primary">coaD</name>
    <name type="ordered locus">DSY1313</name>
</gene>
<organism>
    <name type="scientific">Desulfitobacterium hafniense (strain Y51)</name>
    <dbReference type="NCBI Taxonomy" id="138119"/>
    <lineage>
        <taxon>Bacteria</taxon>
        <taxon>Bacillati</taxon>
        <taxon>Bacillota</taxon>
        <taxon>Clostridia</taxon>
        <taxon>Eubacteriales</taxon>
        <taxon>Desulfitobacteriaceae</taxon>
        <taxon>Desulfitobacterium</taxon>
    </lineage>
</organism>
<evidence type="ECO:0000255" key="1">
    <source>
        <dbReference type="HAMAP-Rule" id="MF_00151"/>
    </source>
</evidence>
<dbReference type="EC" id="2.7.7.3" evidence="1"/>
<dbReference type="EMBL" id="AP008230">
    <property type="protein sequence ID" value="BAE83102.1"/>
    <property type="molecule type" value="Genomic_DNA"/>
</dbReference>
<dbReference type="RefSeq" id="WP_011459625.1">
    <property type="nucleotide sequence ID" value="NC_007907.1"/>
</dbReference>
<dbReference type="SMR" id="Q24XZ0"/>
<dbReference type="STRING" id="138119.DSY1313"/>
<dbReference type="KEGG" id="dsy:DSY1313"/>
<dbReference type="eggNOG" id="COG0669">
    <property type="taxonomic scope" value="Bacteria"/>
</dbReference>
<dbReference type="HOGENOM" id="CLU_100149_0_1_9"/>
<dbReference type="UniPathway" id="UPA00241">
    <property type="reaction ID" value="UER00355"/>
</dbReference>
<dbReference type="Proteomes" id="UP000001946">
    <property type="component" value="Chromosome"/>
</dbReference>
<dbReference type="GO" id="GO:0005737">
    <property type="term" value="C:cytoplasm"/>
    <property type="evidence" value="ECO:0007669"/>
    <property type="project" value="UniProtKB-SubCell"/>
</dbReference>
<dbReference type="GO" id="GO:0005524">
    <property type="term" value="F:ATP binding"/>
    <property type="evidence" value="ECO:0007669"/>
    <property type="project" value="UniProtKB-KW"/>
</dbReference>
<dbReference type="GO" id="GO:0004595">
    <property type="term" value="F:pantetheine-phosphate adenylyltransferase activity"/>
    <property type="evidence" value="ECO:0007669"/>
    <property type="project" value="UniProtKB-UniRule"/>
</dbReference>
<dbReference type="GO" id="GO:0015937">
    <property type="term" value="P:coenzyme A biosynthetic process"/>
    <property type="evidence" value="ECO:0007669"/>
    <property type="project" value="UniProtKB-UniRule"/>
</dbReference>
<dbReference type="CDD" id="cd02163">
    <property type="entry name" value="PPAT"/>
    <property type="match status" value="1"/>
</dbReference>
<dbReference type="Gene3D" id="3.40.50.620">
    <property type="entry name" value="HUPs"/>
    <property type="match status" value="1"/>
</dbReference>
<dbReference type="HAMAP" id="MF_00151">
    <property type="entry name" value="PPAT_bact"/>
    <property type="match status" value="1"/>
</dbReference>
<dbReference type="InterPro" id="IPR004821">
    <property type="entry name" value="Cyt_trans-like"/>
</dbReference>
<dbReference type="InterPro" id="IPR001980">
    <property type="entry name" value="PPAT"/>
</dbReference>
<dbReference type="InterPro" id="IPR014729">
    <property type="entry name" value="Rossmann-like_a/b/a_fold"/>
</dbReference>
<dbReference type="NCBIfam" id="TIGR01510">
    <property type="entry name" value="coaD_prev_kdtB"/>
    <property type="match status" value="1"/>
</dbReference>
<dbReference type="NCBIfam" id="TIGR00125">
    <property type="entry name" value="cyt_tran_rel"/>
    <property type="match status" value="1"/>
</dbReference>
<dbReference type="PANTHER" id="PTHR21342">
    <property type="entry name" value="PHOSPHOPANTETHEINE ADENYLYLTRANSFERASE"/>
    <property type="match status" value="1"/>
</dbReference>
<dbReference type="PANTHER" id="PTHR21342:SF1">
    <property type="entry name" value="PHOSPHOPANTETHEINE ADENYLYLTRANSFERASE"/>
    <property type="match status" value="1"/>
</dbReference>
<dbReference type="Pfam" id="PF01467">
    <property type="entry name" value="CTP_transf_like"/>
    <property type="match status" value="1"/>
</dbReference>
<dbReference type="PRINTS" id="PR01020">
    <property type="entry name" value="LPSBIOSNTHSS"/>
</dbReference>
<dbReference type="SUPFAM" id="SSF52374">
    <property type="entry name" value="Nucleotidylyl transferase"/>
    <property type="match status" value="1"/>
</dbReference>
<accession>Q24XZ0</accession>
<comment type="function">
    <text evidence="1">Reversibly transfers an adenylyl group from ATP to 4'-phosphopantetheine, yielding dephospho-CoA (dPCoA) and pyrophosphate.</text>
</comment>
<comment type="catalytic activity">
    <reaction evidence="1">
        <text>(R)-4'-phosphopantetheine + ATP + H(+) = 3'-dephospho-CoA + diphosphate</text>
        <dbReference type="Rhea" id="RHEA:19801"/>
        <dbReference type="ChEBI" id="CHEBI:15378"/>
        <dbReference type="ChEBI" id="CHEBI:30616"/>
        <dbReference type="ChEBI" id="CHEBI:33019"/>
        <dbReference type="ChEBI" id="CHEBI:57328"/>
        <dbReference type="ChEBI" id="CHEBI:61723"/>
        <dbReference type="EC" id="2.7.7.3"/>
    </reaction>
</comment>
<comment type="cofactor">
    <cofactor evidence="1">
        <name>Mg(2+)</name>
        <dbReference type="ChEBI" id="CHEBI:18420"/>
    </cofactor>
</comment>
<comment type="pathway">
    <text evidence="1">Cofactor biosynthesis; coenzyme A biosynthesis; CoA from (R)-pantothenate: step 4/5.</text>
</comment>
<comment type="subunit">
    <text evidence="1">Homohexamer.</text>
</comment>
<comment type="subcellular location">
    <subcellularLocation>
        <location evidence="1">Cytoplasm</location>
    </subcellularLocation>
</comment>
<comment type="similarity">
    <text evidence="1">Belongs to the bacterial CoaD family.</text>
</comment>
<sequence>MRIAIYPGTFDPVTNGHLDILKRATEFFDEVIVAVAVDSNKTTLFSLEERIQLLETAAEELSQVKIRGFEGLTVEFARQCGANAIIRGLRAMQDFEYEFQLALMNKKLAADIETIFLMTQSEFSFISSSSIKWAASLKGNISEFVPPHVERAIYKKYHPEIDD</sequence>
<name>COAD_DESHY</name>
<feature type="chain" id="PRO_1000011137" description="Phosphopantetheine adenylyltransferase">
    <location>
        <begin position="1"/>
        <end position="163"/>
    </location>
</feature>
<feature type="binding site" evidence="1">
    <location>
        <begin position="9"/>
        <end position="10"/>
    </location>
    <ligand>
        <name>ATP</name>
        <dbReference type="ChEBI" id="CHEBI:30616"/>
    </ligand>
</feature>
<feature type="binding site" evidence="1">
    <location>
        <position position="9"/>
    </location>
    <ligand>
        <name>substrate</name>
    </ligand>
</feature>
<feature type="binding site" evidence="1">
    <location>
        <position position="17"/>
    </location>
    <ligand>
        <name>ATP</name>
        <dbReference type="ChEBI" id="CHEBI:30616"/>
    </ligand>
</feature>
<feature type="binding site" evidence="1">
    <location>
        <position position="41"/>
    </location>
    <ligand>
        <name>substrate</name>
    </ligand>
</feature>
<feature type="binding site" evidence="1">
    <location>
        <position position="73"/>
    </location>
    <ligand>
        <name>substrate</name>
    </ligand>
</feature>
<feature type="binding site" evidence="1">
    <location>
        <position position="87"/>
    </location>
    <ligand>
        <name>substrate</name>
    </ligand>
</feature>
<feature type="binding site" evidence="1">
    <location>
        <begin position="88"/>
        <end position="90"/>
    </location>
    <ligand>
        <name>ATP</name>
        <dbReference type="ChEBI" id="CHEBI:30616"/>
    </ligand>
</feature>
<feature type="binding site" evidence="1">
    <location>
        <position position="98"/>
    </location>
    <ligand>
        <name>ATP</name>
        <dbReference type="ChEBI" id="CHEBI:30616"/>
    </ligand>
</feature>
<feature type="binding site" evidence="1">
    <location>
        <begin position="123"/>
        <end position="129"/>
    </location>
    <ligand>
        <name>ATP</name>
        <dbReference type="ChEBI" id="CHEBI:30616"/>
    </ligand>
</feature>
<feature type="site" description="Transition state stabilizer" evidence="1">
    <location>
        <position position="17"/>
    </location>
</feature>
<keyword id="KW-0067">ATP-binding</keyword>
<keyword id="KW-0173">Coenzyme A biosynthesis</keyword>
<keyword id="KW-0963">Cytoplasm</keyword>
<keyword id="KW-0460">Magnesium</keyword>
<keyword id="KW-0547">Nucleotide-binding</keyword>
<keyword id="KW-0548">Nucleotidyltransferase</keyword>
<keyword id="KW-1185">Reference proteome</keyword>
<keyword id="KW-0808">Transferase</keyword>
<proteinExistence type="inferred from homology"/>